<protein>
    <recommendedName>
        <fullName>Putative B3 domain-containing protein At2g18810</fullName>
    </recommendedName>
</protein>
<gene>
    <name type="ordered locus">At2g18810</name>
    <name type="ORF">MSF3.19</name>
</gene>
<accession>Q9ZV39</accession>
<evidence type="ECO:0000255" key="1">
    <source>
        <dbReference type="PROSITE-ProRule" id="PRU00326"/>
    </source>
</evidence>
<evidence type="ECO:0000256" key="2">
    <source>
        <dbReference type="SAM" id="MobiDB-lite"/>
    </source>
</evidence>
<comment type="subcellular location">
    <subcellularLocation>
        <location evidence="1">Nucleus</location>
    </subcellularLocation>
</comment>
<keyword id="KW-0238">DNA-binding</keyword>
<keyword id="KW-0539">Nucleus</keyword>
<keyword id="KW-1185">Reference proteome</keyword>
<keyword id="KW-0804">Transcription</keyword>
<keyword id="KW-0805">Transcription regulation</keyword>
<organism>
    <name type="scientific">Arabidopsis thaliana</name>
    <name type="common">Mouse-ear cress</name>
    <dbReference type="NCBI Taxonomy" id="3702"/>
    <lineage>
        <taxon>Eukaryota</taxon>
        <taxon>Viridiplantae</taxon>
        <taxon>Streptophyta</taxon>
        <taxon>Embryophyta</taxon>
        <taxon>Tracheophyta</taxon>
        <taxon>Spermatophyta</taxon>
        <taxon>Magnoliopsida</taxon>
        <taxon>eudicotyledons</taxon>
        <taxon>Gunneridae</taxon>
        <taxon>Pentapetalae</taxon>
        <taxon>rosids</taxon>
        <taxon>malvids</taxon>
        <taxon>Brassicales</taxon>
        <taxon>Brassicaceae</taxon>
        <taxon>Camelineae</taxon>
        <taxon>Arabidopsis</taxon>
    </lineage>
</organism>
<feature type="chain" id="PRO_0000375136" description="Putative B3 domain-containing protein At2g18810">
    <location>
        <begin position="1"/>
        <end position="234"/>
    </location>
</feature>
<feature type="DNA-binding region" description="TF-B3" evidence="1">
    <location>
        <begin position="87"/>
        <end position="185"/>
    </location>
</feature>
<feature type="region of interest" description="Disordered" evidence="2">
    <location>
        <begin position="55"/>
        <end position="88"/>
    </location>
</feature>
<feature type="compositionally biased region" description="Polar residues" evidence="2">
    <location>
        <begin position="60"/>
        <end position="72"/>
    </location>
</feature>
<reference key="1">
    <citation type="journal article" date="1999" name="Nature">
        <title>Sequence and analysis of chromosome 2 of the plant Arabidopsis thaliana.</title>
        <authorList>
            <person name="Lin X."/>
            <person name="Kaul S."/>
            <person name="Rounsley S.D."/>
            <person name="Shea T.P."/>
            <person name="Benito M.-I."/>
            <person name="Town C.D."/>
            <person name="Fujii C.Y."/>
            <person name="Mason T.M."/>
            <person name="Bowman C.L."/>
            <person name="Barnstead M.E."/>
            <person name="Feldblyum T.V."/>
            <person name="Buell C.R."/>
            <person name="Ketchum K.A."/>
            <person name="Lee J.J."/>
            <person name="Ronning C.M."/>
            <person name="Koo H.L."/>
            <person name="Moffat K.S."/>
            <person name="Cronin L.A."/>
            <person name="Shen M."/>
            <person name="Pai G."/>
            <person name="Van Aken S."/>
            <person name="Umayam L."/>
            <person name="Tallon L.J."/>
            <person name="Gill J.E."/>
            <person name="Adams M.D."/>
            <person name="Carrera A.J."/>
            <person name="Creasy T.H."/>
            <person name="Goodman H.M."/>
            <person name="Somerville C.R."/>
            <person name="Copenhaver G.P."/>
            <person name="Preuss D."/>
            <person name="Nierman W.C."/>
            <person name="White O."/>
            <person name="Eisen J.A."/>
            <person name="Salzberg S.L."/>
            <person name="Fraser C.M."/>
            <person name="Venter J.C."/>
        </authorList>
    </citation>
    <scope>NUCLEOTIDE SEQUENCE [LARGE SCALE GENOMIC DNA]</scope>
    <source>
        <strain>cv. Columbia</strain>
    </source>
</reference>
<reference key="2">
    <citation type="journal article" date="2017" name="Plant J.">
        <title>Araport11: a complete reannotation of the Arabidopsis thaliana reference genome.</title>
        <authorList>
            <person name="Cheng C.Y."/>
            <person name="Krishnakumar V."/>
            <person name="Chan A.P."/>
            <person name="Thibaud-Nissen F."/>
            <person name="Schobel S."/>
            <person name="Town C.D."/>
        </authorList>
    </citation>
    <scope>GENOME REANNOTATION</scope>
    <source>
        <strain>cv. Columbia</strain>
    </source>
</reference>
<reference key="3">
    <citation type="journal article" date="2008" name="Trends Plant Sci.">
        <title>The plant B3 superfamily.</title>
        <authorList>
            <person name="Swaminathan K."/>
            <person name="Peterson K."/>
            <person name="Jack T."/>
        </authorList>
    </citation>
    <scope>GENE FAMILY</scope>
</reference>
<proteinExistence type="inferred from homology"/>
<sequence length="234" mass="26637">MVRAFAYEEIGETSTEAHASVEDNKRDRTRRVINYNLRSTTMISSLSKRLKIDECKNQDPEQNPNRVASSPSLCHVKSKRPQKGVSNKPILDMDFLNEEELEKIDRHYKKISDSDKGADVILVNSEGLQRKLKLKRWDMTSTSNYVLGSGWNKVVTENILETGTRLRLWSFHSPDMLFFALVLSDPDLAPTKDWECLNLLAKLTVETACLEASQDADTMSSLVSDTELDLELRL</sequence>
<name>Y2881_ARATH</name>
<dbReference type="EMBL" id="AC005724">
    <property type="protein sequence ID" value="AAD08950.1"/>
    <property type="molecule type" value="Genomic_DNA"/>
</dbReference>
<dbReference type="EMBL" id="CP002685">
    <property type="protein sequence ID" value="AEC06810.1"/>
    <property type="molecule type" value="Genomic_DNA"/>
</dbReference>
<dbReference type="PIR" id="H84568">
    <property type="entry name" value="H84568"/>
</dbReference>
<dbReference type="RefSeq" id="NP_179471.1">
    <property type="nucleotide sequence ID" value="NM_127437.1"/>
</dbReference>
<dbReference type="PaxDb" id="3702-AT2G18810.1"/>
<dbReference type="EnsemblPlants" id="AT2G18810.1">
    <property type="protein sequence ID" value="AT2G18810.1"/>
    <property type="gene ID" value="AT2G18810"/>
</dbReference>
<dbReference type="GeneID" id="816396"/>
<dbReference type="Gramene" id="AT2G18810.1">
    <property type="protein sequence ID" value="AT2G18810.1"/>
    <property type="gene ID" value="AT2G18810"/>
</dbReference>
<dbReference type="KEGG" id="ath:AT2G18810"/>
<dbReference type="Araport" id="AT2G18810"/>
<dbReference type="TAIR" id="AT2G18810"/>
<dbReference type="HOGENOM" id="CLU_1186424_0_0_1"/>
<dbReference type="InParanoid" id="Q9ZV39"/>
<dbReference type="PhylomeDB" id="Q9ZV39"/>
<dbReference type="PRO" id="PR:Q9ZV39"/>
<dbReference type="Proteomes" id="UP000006548">
    <property type="component" value="Chromosome 2"/>
</dbReference>
<dbReference type="ExpressionAtlas" id="Q9ZV39">
    <property type="expression patterns" value="baseline and differential"/>
</dbReference>
<dbReference type="GO" id="GO:0005634">
    <property type="term" value="C:nucleus"/>
    <property type="evidence" value="ECO:0007669"/>
    <property type="project" value="UniProtKB-SubCell"/>
</dbReference>
<dbReference type="GO" id="GO:0003677">
    <property type="term" value="F:DNA binding"/>
    <property type="evidence" value="ECO:0007669"/>
    <property type="project" value="UniProtKB-KW"/>
</dbReference>
<dbReference type="Gene3D" id="2.40.330.10">
    <property type="entry name" value="DNA-binding pseudobarrel domain"/>
    <property type="match status" value="1"/>
</dbReference>
<dbReference type="InterPro" id="IPR005508">
    <property type="entry name" value="At2g31720-like"/>
</dbReference>
<dbReference type="InterPro" id="IPR003340">
    <property type="entry name" value="B3_DNA-bd"/>
</dbReference>
<dbReference type="InterPro" id="IPR015300">
    <property type="entry name" value="DNA-bd_pseudobarrel_sf"/>
</dbReference>
<dbReference type="PANTHER" id="PTHR31541">
    <property type="entry name" value="B3 DOMAIN PLANT PROTEIN-RELATED"/>
    <property type="match status" value="1"/>
</dbReference>
<dbReference type="PANTHER" id="PTHR31541:SF61">
    <property type="entry name" value="TF-B3 DOMAIN-CONTAINING PROTEIN"/>
    <property type="match status" value="1"/>
</dbReference>
<dbReference type="Pfam" id="PF03754">
    <property type="entry name" value="At2g31720-like"/>
    <property type="match status" value="1"/>
</dbReference>
<dbReference type="SUPFAM" id="SSF101936">
    <property type="entry name" value="DNA-binding pseudobarrel domain"/>
    <property type="match status" value="1"/>
</dbReference>
<dbReference type="PROSITE" id="PS50863">
    <property type="entry name" value="B3"/>
    <property type="match status" value="1"/>
</dbReference>